<proteinExistence type="inferred from homology"/>
<evidence type="ECO:0000255" key="1">
    <source>
        <dbReference type="HAMAP-Rule" id="MF_01325"/>
    </source>
</evidence>
<evidence type="ECO:0000256" key="2">
    <source>
        <dbReference type="SAM" id="MobiDB-lite"/>
    </source>
</evidence>
<evidence type="ECO:0000305" key="3"/>
<name>RL3_STAS1</name>
<keyword id="KW-1185">Reference proteome</keyword>
<keyword id="KW-0687">Ribonucleoprotein</keyword>
<keyword id="KW-0689">Ribosomal protein</keyword>
<keyword id="KW-0694">RNA-binding</keyword>
<keyword id="KW-0699">rRNA-binding</keyword>
<accession>Q49ZG8</accession>
<sequence length="219" mass="23645">MTKGILGRKIGMTQVFGENGDLIPVTVVEASQNVILQKKSEEIDGYNAIQVGYEDKQAYKKDSRSSKYANKPAEGHAKKAGTAPKRFIREFRNVNVDEYEVGQEVSVNTFEAGDVIDVTGVSKGKGFQGAIKRHNQARGPMSHGSHFHRAPGSVGMASDASRVFKGQKMPGRMGGNTVTVQNLEVVQIDAENNVILVKGNVPGPKKGFVEITSSIKGNK</sequence>
<protein>
    <recommendedName>
        <fullName evidence="1">Large ribosomal subunit protein uL3</fullName>
    </recommendedName>
    <alternativeName>
        <fullName evidence="3">50S ribosomal protein L3</fullName>
    </alternativeName>
</protein>
<reference key="1">
    <citation type="journal article" date="2005" name="Proc. Natl. Acad. Sci. U.S.A.">
        <title>Whole genome sequence of Staphylococcus saprophyticus reveals the pathogenesis of uncomplicated urinary tract infection.</title>
        <authorList>
            <person name="Kuroda M."/>
            <person name="Yamashita A."/>
            <person name="Hirakawa H."/>
            <person name="Kumano M."/>
            <person name="Morikawa K."/>
            <person name="Higashide M."/>
            <person name="Maruyama A."/>
            <person name="Inose Y."/>
            <person name="Matoba K."/>
            <person name="Toh H."/>
            <person name="Kuhara S."/>
            <person name="Hattori M."/>
            <person name="Ohta T."/>
        </authorList>
    </citation>
    <scope>NUCLEOTIDE SEQUENCE [LARGE SCALE GENOMIC DNA]</scope>
    <source>
        <strain>ATCC 15305 / DSM 20229 / NCIMB 8711 / NCTC 7292 / S-41</strain>
    </source>
</reference>
<gene>
    <name evidence="1" type="primary">rplC</name>
    <name type="ordered locus">SSP0663</name>
</gene>
<comment type="function">
    <text evidence="1">One of the primary rRNA binding proteins, it binds directly near the 3'-end of the 23S rRNA, where it nucleates assembly of the 50S subunit.</text>
</comment>
<comment type="subunit">
    <text evidence="1">Part of the 50S ribosomal subunit. Forms a cluster with proteins L14 and L19.</text>
</comment>
<comment type="similarity">
    <text evidence="1">Belongs to the universal ribosomal protein uL3 family.</text>
</comment>
<dbReference type="EMBL" id="AP008934">
    <property type="protein sequence ID" value="BAE17808.1"/>
    <property type="molecule type" value="Genomic_DNA"/>
</dbReference>
<dbReference type="RefSeq" id="WP_011302598.1">
    <property type="nucleotide sequence ID" value="NC_007350.1"/>
</dbReference>
<dbReference type="SMR" id="Q49ZG8"/>
<dbReference type="GeneID" id="3615962"/>
<dbReference type="KEGG" id="ssp:SSP0663"/>
<dbReference type="PATRIC" id="fig|342451.11.peg.665"/>
<dbReference type="eggNOG" id="COG0087">
    <property type="taxonomic scope" value="Bacteria"/>
</dbReference>
<dbReference type="HOGENOM" id="CLU_044142_4_1_9"/>
<dbReference type="OrthoDB" id="9806135at2"/>
<dbReference type="Proteomes" id="UP000006371">
    <property type="component" value="Chromosome"/>
</dbReference>
<dbReference type="GO" id="GO:0022625">
    <property type="term" value="C:cytosolic large ribosomal subunit"/>
    <property type="evidence" value="ECO:0007669"/>
    <property type="project" value="TreeGrafter"/>
</dbReference>
<dbReference type="GO" id="GO:0019843">
    <property type="term" value="F:rRNA binding"/>
    <property type="evidence" value="ECO:0007669"/>
    <property type="project" value="UniProtKB-UniRule"/>
</dbReference>
<dbReference type="GO" id="GO:0003735">
    <property type="term" value="F:structural constituent of ribosome"/>
    <property type="evidence" value="ECO:0007669"/>
    <property type="project" value="InterPro"/>
</dbReference>
<dbReference type="GO" id="GO:0006412">
    <property type="term" value="P:translation"/>
    <property type="evidence" value="ECO:0007669"/>
    <property type="project" value="UniProtKB-UniRule"/>
</dbReference>
<dbReference type="FunFam" id="2.40.30.10:FF:000004">
    <property type="entry name" value="50S ribosomal protein L3"/>
    <property type="match status" value="1"/>
</dbReference>
<dbReference type="FunFam" id="3.30.160.810:FF:000002">
    <property type="entry name" value="50S ribosomal protein L3"/>
    <property type="match status" value="1"/>
</dbReference>
<dbReference type="Gene3D" id="3.30.160.810">
    <property type="match status" value="1"/>
</dbReference>
<dbReference type="Gene3D" id="2.40.30.10">
    <property type="entry name" value="Translation factors"/>
    <property type="match status" value="1"/>
</dbReference>
<dbReference type="HAMAP" id="MF_01325_B">
    <property type="entry name" value="Ribosomal_uL3_B"/>
    <property type="match status" value="1"/>
</dbReference>
<dbReference type="InterPro" id="IPR000597">
    <property type="entry name" value="Ribosomal_uL3"/>
</dbReference>
<dbReference type="InterPro" id="IPR019927">
    <property type="entry name" value="Ribosomal_uL3_bac/org-type"/>
</dbReference>
<dbReference type="InterPro" id="IPR019926">
    <property type="entry name" value="Ribosomal_uL3_CS"/>
</dbReference>
<dbReference type="InterPro" id="IPR009000">
    <property type="entry name" value="Transl_B-barrel_sf"/>
</dbReference>
<dbReference type="NCBIfam" id="TIGR03625">
    <property type="entry name" value="L3_bact"/>
    <property type="match status" value="1"/>
</dbReference>
<dbReference type="PANTHER" id="PTHR11229">
    <property type="entry name" value="50S RIBOSOMAL PROTEIN L3"/>
    <property type="match status" value="1"/>
</dbReference>
<dbReference type="PANTHER" id="PTHR11229:SF16">
    <property type="entry name" value="LARGE RIBOSOMAL SUBUNIT PROTEIN UL3C"/>
    <property type="match status" value="1"/>
</dbReference>
<dbReference type="Pfam" id="PF00297">
    <property type="entry name" value="Ribosomal_L3"/>
    <property type="match status" value="1"/>
</dbReference>
<dbReference type="SUPFAM" id="SSF50447">
    <property type="entry name" value="Translation proteins"/>
    <property type="match status" value="1"/>
</dbReference>
<dbReference type="PROSITE" id="PS00474">
    <property type="entry name" value="RIBOSOMAL_L3"/>
    <property type="match status" value="1"/>
</dbReference>
<feature type="chain" id="PRO_0000077162" description="Large ribosomal subunit protein uL3">
    <location>
        <begin position="1"/>
        <end position="219"/>
    </location>
</feature>
<feature type="region of interest" description="Disordered" evidence="2">
    <location>
        <begin position="62"/>
        <end position="81"/>
    </location>
</feature>
<feature type="region of interest" description="Disordered" evidence="2">
    <location>
        <begin position="136"/>
        <end position="156"/>
    </location>
</feature>
<organism>
    <name type="scientific">Staphylococcus saprophyticus subsp. saprophyticus (strain ATCC 15305 / DSM 20229 / NCIMB 8711 / NCTC 7292 / S-41)</name>
    <dbReference type="NCBI Taxonomy" id="342451"/>
    <lineage>
        <taxon>Bacteria</taxon>
        <taxon>Bacillati</taxon>
        <taxon>Bacillota</taxon>
        <taxon>Bacilli</taxon>
        <taxon>Bacillales</taxon>
        <taxon>Staphylococcaceae</taxon>
        <taxon>Staphylococcus</taxon>
    </lineage>
</organism>